<protein>
    <recommendedName>
        <fullName>Platelet-derived growth factor D</fullName>
        <shortName>PDGF-D</shortName>
    </recommendedName>
    <alternativeName>
        <fullName>Spinal cord-derived growth factor B</fullName>
        <shortName>SCDGF-B</shortName>
    </alternativeName>
    <component>
        <recommendedName>
            <fullName>Platelet-derived growth factor D, latent form</fullName>
            <shortName>PDGFD latent form</shortName>
        </recommendedName>
    </component>
    <component>
        <recommendedName>
            <fullName>Platelet-derived growth factor D, receptor-binding form</fullName>
            <shortName>PDGFD receptor-binding form</shortName>
        </recommendedName>
    </component>
</protein>
<reference key="1">
    <citation type="journal article" date="2001" name="Nat. Cell Biol.">
        <title>PDGF D, a novel protease-activated growth factor.</title>
        <authorList>
            <person name="LaRochelle W.J."/>
            <person name="Jeffers M."/>
            <person name="McDonald W.F."/>
            <person name="Chillakuru R.A."/>
            <person name="Giese N.A."/>
            <person name="Lokker N.A."/>
            <person name="Sullivan C."/>
            <person name="Boldog F.L."/>
            <person name="Yang M."/>
            <person name="Vernet C."/>
            <person name="Burgess C.E."/>
            <person name="Fernandez E."/>
            <person name="Deegler L.L."/>
            <person name="Rittman B."/>
            <person name="Shimkets J."/>
            <person name="Shimkets R.A."/>
            <person name="Rothberg J.M."/>
            <person name="Lichenstein H.S."/>
        </authorList>
    </citation>
    <scope>NUCLEOTIDE SEQUENCE [MRNA] (ISOFORM 1)</scope>
    <source>
        <strain>BALB/cJ</strain>
    </source>
</reference>
<reference key="2">
    <citation type="journal article" date="2003" name="Biochem. Biophys. Res. Commun.">
        <title>A novel murine PDGF-D splicing variant results in significant differences in peptide expression and function.</title>
        <authorList>
            <person name="Zhuo Y."/>
            <person name="Hoyle G.W."/>
            <person name="Zhang J."/>
            <person name="Morris G."/>
            <person name="Lasky J.A."/>
        </authorList>
    </citation>
    <scope>NUCLEOTIDE SEQUENCE [MRNA] (ISOFORMS 1 AND 3)</scope>
    <scope>TISSUE SPECIFICITY</scope>
</reference>
<reference key="3">
    <citation type="journal article" date="2005" name="Science">
        <title>The transcriptional landscape of the mammalian genome.</title>
        <authorList>
            <person name="Carninci P."/>
            <person name="Kasukawa T."/>
            <person name="Katayama S."/>
            <person name="Gough J."/>
            <person name="Frith M.C."/>
            <person name="Maeda N."/>
            <person name="Oyama R."/>
            <person name="Ravasi T."/>
            <person name="Lenhard B."/>
            <person name="Wells C."/>
            <person name="Kodzius R."/>
            <person name="Shimokawa K."/>
            <person name="Bajic V.B."/>
            <person name="Brenner S.E."/>
            <person name="Batalov S."/>
            <person name="Forrest A.R."/>
            <person name="Zavolan M."/>
            <person name="Davis M.J."/>
            <person name="Wilming L.G."/>
            <person name="Aidinis V."/>
            <person name="Allen J.E."/>
            <person name="Ambesi-Impiombato A."/>
            <person name="Apweiler R."/>
            <person name="Aturaliya R.N."/>
            <person name="Bailey T.L."/>
            <person name="Bansal M."/>
            <person name="Baxter L."/>
            <person name="Beisel K.W."/>
            <person name="Bersano T."/>
            <person name="Bono H."/>
            <person name="Chalk A.M."/>
            <person name="Chiu K.P."/>
            <person name="Choudhary V."/>
            <person name="Christoffels A."/>
            <person name="Clutterbuck D.R."/>
            <person name="Crowe M.L."/>
            <person name="Dalla E."/>
            <person name="Dalrymple B.P."/>
            <person name="de Bono B."/>
            <person name="Della Gatta G."/>
            <person name="di Bernardo D."/>
            <person name="Down T."/>
            <person name="Engstrom P."/>
            <person name="Fagiolini M."/>
            <person name="Faulkner G."/>
            <person name="Fletcher C.F."/>
            <person name="Fukushima T."/>
            <person name="Furuno M."/>
            <person name="Futaki S."/>
            <person name="Gariboldi M."/>
            <person name="Georgii-Hemming P."/>
            <person name="Gingeras T.R."/>
            <person name="Gojobori T."/>
            <person name="Green R.E."/>
            <person name="Gustincich S."/>
            <person name="Harbers M."/>
            <person name="Hayashi Y."/>
            <person name="Hensch T.K."/>
            <person name="Hirokawa N."/>
            <person name="Hill D."/>
            <person name="Huminiecki L."/>
            <person name="Iacono M."/>
            <person name="Ikeo K."/>
            <person name="Iwama A."/>
            <person name="Ishikawa T."/>
            <person name="Jakt M."/>
            <person name="Kanapin A."/>
            <person name="Katoh M."/>
            <person name="Kawasawa Y."/>
            <person name="Kelso J."/>
            <person name="Kitamura H."/>
            <person name="Kitano H."/>
            <person name="Kollias G."/>
            <person name="Krishnan S.P."/>
            <person name="Kruger A."/>
            <person name="Kummerfeld S.K."/>
            <person name="Kurochkin I.V."/>
            <person name="Lareau L.F."/>
            <person name="Lazarevic D."/>
            <person name="Lipovich L."/>
            <person name="Liu J."/>
            <person name="Liuni S."/>
            <person name="McWilliam S."/>
            <person name="Madan Babu M."/>
            <person name="Madera M."/>
            <person name="Marchionni L."/>
            <person name="Matsuda H."/>
            <person name="Matsuzawa S."/>
            <person name="Miki H."/>
            <person name="Mignone F."/>
            <person name="Miyake S."/>
            <person name="Morris K."/>
            <person name="Mottagui-Tabar S."/>
            <person name="Mulder N."/>
            <person name="Nakano N."/>
            <person name="Nakauchi H."/>
            <person name="Ng P."/>
            <person name="Nilsson R."/>
            <person name="Nishiguchi S."/>
            <person name="Nishikawa S."/>
            <person name="Nori F."/>
            <person name="Ohara O."/>
            <person name="Okazaki Y."/>
            <person name="Orlando V."/>
            <person name="Pang K.C."/>
            <person name="Pavan W.J."/>
            <person name="Pavesi G."/>
            <person name="Pesole G."/>
            <person name="Petrovsky N."/>
            <person name="Piazza S."/>
            <person name="Reed J."/>
            <person name="Reid J.F."/>
            <person name="Ring B.Z."/>
            <person name="Ringwald M."/>
            <person name="Rost B."/>
            <person name="Ruan Y."/>
            <person name="Salzberg S.L."/>
            <person name="Sandelin A."/>
            <person name="Schneider C."/>
            <person name="Schoenbach C."/>
            <person name="Sekiguchi K."/>
            <person name="Semple C.A."/>
            <person name="Seno S."/>
            <person name="Sessa L."/>
            <person name="Sheng Y."/>
            <person name="Shibata Y."/>
            <person name="Shimada H."/>
            <person name="Shimada K."/>
            <person name="Silva D."/>
            <person name="Sinclair B."/>
            <person name="Sperling S."/>
            <person name="Stupka E."/>
            <person name="Sugiura K."/>
            <person name="Sultana R."/>
            <person name="Takenaka Y."/>
            <person name="Taki K."/>
            <person name="Tammoja K."/>
            <person name="Tan S.L."/>
            <person name="Tang S."/>
            <person name="Taylor M.S."/>
            <person name="Tegner J."/>
            <person name="Teichmann S.A."/>
            <person name="Ueda H.R."/>
            <person name="van Nimwegen E."/>
            <person name="Verardo R."/>
            <person name="Wei C.L."/>
            <person name="Yagi K."/>
            <person name="Yamanishi H."/>
            <person name="Zabarovsky E."/>
            <person name="Zhu S."/>
            <person name="Zimmer A."/>
            <person name="Hide W."/>
            <person name="Bult C."/>
            <person name="Grimmond S.M."/>
            <person name="Teasdale R.D."/>
            <person name="Liu E.T."/>
            <person name="Brusic V."/>
            <person name="Quackenbush J."/>
            <person name="Wahlestedt C."/>
            <person name="Mattick J.S."/>
            <person name="Hume D.A."/>
            <person name="Kai C."/>
            <person name="Sasaki D."/>
            <person name="Tomaru Y."/>
            <person name="Fukuda S."/>
            <person name="Kanamori-Katayama M."/>
            <person name="Suzuki M."/>
            <person name="Aoki J."/>
            <person name="Arakawa T."/>
            <person name="Iida J."/>
            <person name="Imamura K."/>
            <person name="Itoh M."/>
            <person name="Kato T."/>
            <person name="Kawaji H."/>
            <person name="Kawagashira N."/>
            <person name="Kawashima T."/>
            <person name="Kojima M."/>
            <person name="Kondo S."/>
            <person name="Konno H."/>
            <person name="Nakano K."/>
            <person name="Ninomiya N."/>
            <person name="Nishio T."/>
            <person name="Okada M."/>
            <person name="Plessy C."/>
            <person name="Shibata K."/>
            <person name="Shiraki T."/>
            <person name="Suzuki S."/>
            <person name="Tagami M."/>
            <person name="Waki K."/>
            <person name="Watahiki A."/>
            <person name="Okamura-Oho Y."/>
            <person name="Suzuki H."/>
            <person name="Kawai J."/>
            <person name="Hayashizaki Y."/>
        </authorList>
    </citation>
    <scope>NUCLEOTIDE SEQUENCE [LARGE SCALE MRNA] (ISOFORMS 1 AND 2)</scope>
    <source>
        <strain>C57BL/6J</strain>
        <tissue>Hippocampus</tissue>
    </source>
</reference>
<reference key="4">
    <citation type="journal article" date="2004" name="Genome Res.">
        <title>The status, quality, and expansion of the NIH full-length cDNA project: the Mammalian Gene Collection (MGC).</title>
        <authorList>
            <consortium name="The MGC Project Team"/>
        </authorList>
    </citation>
    <scope>NUCLEOTIDE SEQUENCE [LARGE SCALE MRNA] (ISOFORM 3)</scope>
    <source>
        <strain>FVB/N</strain>
        <tissue>Mammary gland</tissue>
    </source>
</reference>
<reference key="5">
    <citation type="journal article" date="2001" name="Nat. Cell Biol.">
        <title>PDGF-D is a specific, protease-activated ligand for the PDGF beta-receptor.</title>
        <authorList>
            <person name="Bergsten E."/>
            <person name="Uutela M."/>
            <person name="Li X."/>
            <person name="Pietras K."/>
            <person name="Oestman A."/>
            <person name="Heldin C.-H."/>
            <person name="Alitalo K."/>
            <person name="Eriksson U."/>
        </authorList>
    </citation>
    <scope>TISSUE SPECIFICITY</scope>
</reference>
<reference key="6">
    <citation type="journal article" date="2002" name="Cancer Res.">
        <title>Platelet-derived growth factor D: tumorigenicity in mice and dysregulated expression in human cancer.</title>
        <authorList>
            <person name="LaRochelle W.J."/>
            <person name="Jeffers M."/>
            <person name="Corvalan J.R.F."/>
            <person name="Jia X.-C."/>
            <person name="Feng X."/>
            <person name="Vanegas S."/>
            <person name="Vickroy J.D."/>
            <person name="Yang X.-D."/>
            <person name="Chen F."/>
            <person name="Gazit G."/>
            <person name="Mayotte J."/>
            <person name="Macaluso J."/>
            <person name="Rittman B."/>
            <person name="Wu F."/>
            <person name="Dhanabal M."/>
            <person name="Herrmann J."/>
            <person name="Lichenstein H.S."/>
        </authorList>
    </citation>
    <scope>FUNCTION</scope>
</reference>
<reference key="7">
    <citation type="journal article" date="2004" name="Cytokine Growth Factor Rev.">
        <title>PDGF signaling in cells and mice.</title>
        <authorList>
            <person name="Tallquist M."/>
            <person name="Kazlauskas A."/>
        </authorList>
    </citation>
    <scope>REVIEW</scope>
</reference>
<reference key="8">
    <citation type="journal article" date="2004" name="J. Am. Soc. Nephrol.">
        <title>Exogenous PDGF-D is a potent mesangial cell mitogen and causes a severe mesangial proliferative glomerulopathy.</title>
        <authorList>
            <person name="Hudkins K.L."/>
            <person name="Gilbertson D.G."/>
            <person name="Carling M."/>
            <person name="Taneda S."/>
            <person name="Hughes S.D."/>
            <person name="Holdren M.S."/>
            <person name="Palmer T.E."/>
            <person name="Topouzis S."/>
            <person name="Haran A.C."/>
            <person name="Feldhaus A.L."/>
            <person name="Alpers C.E."/>
        </authorList>
    </citation>
    <scope>FUNCTION</scope>
    <scope>TISSUE SPECIFICITY</scope>
</reference>
<reference key="9">
    <citation type="journal article" date="2003" name="J. Am. Soc. Nephrol.">
        <title>Obstructive uropathy in mice and humans: potential role for PDGF-D in the progression of tubulointerstitial injury.</title>
        <authorList>
            <person name="Taneda S."/>
            <person name="Hudkins K.L."/>
            <person name="Topouzis S."/>
            <person name="Gilbertson D.G."/>
            <person name="Ophascharoensuk V."/>
            <person name="Truong L."/>
            <person name="Johnson R.J."/>
            <person name="Alpers C.E."/>
        </authorList>
    </citation>
    <scope>TISSUE SPECIFICITY</scope>
</reference>
<reference key="10">
    <citation type="journal article" date="2004" name="Blood">
        <title>PDGF-D induces macrophage recruitment, increased interstitial pressure, and blood vessel maturation during angiogenesis.</title>
        <authorList>
            <person name="Uutela M."/>
            <person name="Wirzenius M."/>
            <person name="Paavonen K."/>
            <person name="Rajantie I."/>
            <person name="He Y."/>
            <person name="Karpanen T."/>
            <person name="Lohela M."/>
            <person name="Wiig H."/>
            <person name="Salven P."/>
            <person name="Pajusola K."/>
            <person name="Eriksson U."/>
            <person name="Alitalo K."/>
        </authorList>
    </citation>
    <scope>FUNCTION</scope>
</reference>
<gene>
    <name type="primary">Pdgfd</name>
    <name type="synonym">Scdgfb</name>
</gene>
<comment type="function">
    <text evidence="1 5 8 9">Growth factor that plays an essential role in the regulation of embryonic development, cell proliferation, cell migration, survival and chemotaxis. Potent mitogen for cells of mesenchymal origin. Plays an important role in wound healing (By similarity). Has oncogenic potential and can induce tumor formation. Induces macrophage recruitment, increased interstitial pressure, and blood vessel maturation during angiogenesis. Can initiate events that lead to a mesangial proliferative glomerulonephritis, including influx of monocytes and macrophages and production of extracellular matrix.</text>
</comment>
<comment type="subunit">
    <text evidence="1">Homodimer; disulfide-linked. Interacts with PDGFRB homodimers, and with heterodimers formed by PDGFRA and PDGFRB (By similarity).</text>
</comment>
<comment type="subcellular location">
    <subcellularLocation>
        <location evidence="1">Secreted</location>
    </subcellularLocation>
    <text evidence="1">Released by platelets upon wounding.</text>
</comment>
<comment type="alternative products">
    <event type="alternative splicing"/>
    <isoform>
        <id>Q925I7-1</id>
        <name>1</name>
        <name>Long</name>
        <sequence type="displayed"/>
    </isoform>
    <isoform>
        <id>Q925I7-2</id>
        <name>2</name>
        <sequence type="described" ref="VSP_020616"/>
    </isoform>
    <isoform>
        <id>Q925I7-3</id>
        <name>3</name>
        <name>Short</name>
        <sequence type="described" ref="VSP_020617 VSP_020618"/>
    </isoform>
</comment>
<comment type="tissue specificity">
    <text evidence="4 6 7 8">Expressed at high levels in developing heart, lung, kidney and some muscle derivatives. Moderately expressed in liver, brain and testis. In the kidney, localized to glomerular mesangial cells and vascular smooth muscle cells. Up-regulated in areas of renal fibrosis. In mice with unilateral ureteral obstruction, expressed in interstitial cells at day 4, with an increased to maximal expression at day 14.</text>
</comment>
<comment type="PTM">
    <text evidence="1">Activated by proteolytic cleavage. Proteolytic removal of the N-terminal CUB domain releasing the core domain is necessary for unmasking the receptor-binding epitopes of the core domain. Cleavage after Arg-247 or Arg-249 by urokinase plasminogen activator gives rise to the active form (By similarity).</text>
</comment>
<comment type="similarity">
    <text evidence="13">Belongs to the PDGF/VEGF growth factor family.</text>
</comment>
<organism>
    <name type="scientific">Mus musculus</name>
    <name type="common">Mouse</name>
    <dbReference type="NCBI Taxonomy" id="10090"/>
    <lineage>
        <taxon>Eukaryota</taxon>
        <taxon>Metazoa</taxon>
        <taxon>Chordata</taxon>
        <taxon>Craniata</taxon>
        <taxon>Vertebrata</taxon>
        <taxon>Euteleostomi</taxon>
        <taxon>Mammalia</taxon>
        <taxon>Eutheria</taxon>
        <taxon>Euarchontoglires</taxon>
        <taxon>Glires</taxon>
        <taxon>Rodentia</taxon>
        <taxon>Myomorpha</taxon>
        <taxon>Muroidea</taxon>
        <taxon>Muridae</taxon>
        <taxon>Murinae</taxon>
        <taxon>Mus</taxon>
        <taxon>Mus</taxon>
    </lineage>
</organism>
<sequence>MQRLVLVSILLCANFSCYPDTFATPQRASIKALRNANLRRDESNHLTDLYQREENIQVTSNGHVQSPRFPNSYPRNLLLTWWLRSQEKTRIQLSFDHQFGLEEAENDICRYDFVEVEEVSESSTVVRGRWCGHKEIPPRITSRTNQIKITFKSDDYFVAKPGFKIYYSFVEDFQPEAASETNWESVTSSFSGVSYHSPSITDPTLTADALDKTVAEFDTVEDLLKHFNPVSWQDDLENLYLDTPHYRGRSYHDRKSKVDLDRLNDDVKRYSCTPRNHSVNLREELKLTNAVFFPRCLLVQRCGGNCGCGTVNWKSCTCSSGKTVKKYHEVLKFEPGHFKRRGKAKNMALVDIQLDHHERCDCICSSRPPR</sequence>
<keyword id="KW-0025">Alternative splicing</keyword>
<keyword id="KW-0165">Cleavage on pair of basic residues</keyword>
<keyword id="KW-0217">Developmental protein</keyword>
<keyword id="KW-1015">Disulfide bond</keyword>
<keyword id="KW-0325">Glycoprotein</keyword>
<keyword id="KW-0339">Growth factor</keyword>
<keyword id="KW-0497">Mitogen</keyword>
<keyword id="KW-0656">Proto-oncogene</keyword>
<keyword id="KW-1185">Reference proteome</keyword>
<keyword id="KW-0964">Secreted</keyword>
<keyword id="KW-0732">Signal</keyword>
<name>PDGFD_MOUSE</name>
<accession>Q925I7</accession>
<accession>Q3URF6</accession>
<accession>Q8K2L3</accession>
<accession>Q9D1L8</accession>
<dbReference type="EMBL" id="AF335583">
    <property type="protein sequence ID" value="AAK38839.1"/>
    <property type="molecule type" value="mRNA"/>
</dbReference>
<dbReference type="EMBL" id="AK003359">
    <property type="protein sequence ID" value="BAB22735.2"/>
    <property type="molecule type" value="mRNA"/>
</dbReference>
<dbReference type="EMBL" id="AK141551">
    <property type="protein sequence ID" value="BAE24732.1"/>
    <property type="molecule type" value="mRNA"/>
</dbReference>
<dbReference type="EMBL" id="BC030896">
    <property type="protein sequence ID" value="AAH30896.1"/>
    <property type="molecule type" value="mRNA"/>
</dbReference>
<dbReference type="CCDS" id="CCDS22801.1">
    <molecule id="Q925I7-1"/>
</dbReference>
<dbReference type="CCDS" id="CCDS90489.1">
    <molecule id="Q925I7-3"/>
</dbReference>
<dbReference type="CCDS" id="CCDS90490.1">
    <molecule id="Q925I7-2"/>
</dbReference>
<dbReference type="RefSeq" id="NP_001344326.1">
    <molecule id="Q925I7-2"/>
    <property type="nucleotide sequence ID" value="NM_001357397.1"/>
</dbReference>
<dbReference type="RefSeq" id="NP_001344327.1">
    <molecule id="Q925I7-3"/>
    <property type="nucleotide sequence ID" value="NM_001357398.1"/>
</dbReference>
<dbReference type="RefSeq" id="NP_082200.1">
    <molecule id="Q925I7-1"/>
    <property type="nucleotide sequence ID" value="NM_027924.3"/>
</dbReference>
<dbReference type="RefSeq" id="XP_006509948.1">
    <property type="nucleotide sequence ID" value="XM_006509885.3"/>
</dbReference>
<dbReference type="RefSeq" id="XP_006509949.1">
    <property type="nucleotide sequence ID" value="XM_006509886.3"/>
</dbReference>
<dbReference type="SMR" id="Q925I7"/>
<dbReference type="ComplexPortal" id="CPX-2915">
    <property type="entry name" value="Platelet-derived growth factor DD complex"/>
</dbReference>
<dbReference type="ComplexPortal" id="CPX-2916">
    <property type="entry name" value="PDGF receptor alpha-beta - PDGF-DD complex"/>
</dbReference>
<dbReference type="ComplexPortal" id="CPX-2917">
    <property type="entry name" value="PDGF receptor beta - PDGF-DD complex"/>
</dbReference>
<dbReference type="FunCoup" id="Q925I7">
    <property type="interactions" value="1371"/>
</dbReference>
<dbReference type="STRING" id="10090.ENSMUSP00000128388"/>
<dbReference type="GlyCosmos" id="Q925I7">
    <property type="glycosylation" value="1 site, No reported glycans"/>
</dbReference>
<dbReference type="GlyGen" id="Q925I7">
    <property type="glycosylation" value="1 site, 1 N-linked glycan (1 site)"/>
</dbReference>
<dbReference type="PhosphoSitePlus" id="Q925I7"/>
<dbReference type="PaxDb" id="10090-ENSMUSP00000128388"/>
<dbReference type="PeptideAtlas" id="Q925I7"/>
<dbReference type="ProteomicsDB" id="294046">
    <molecule id="Q925I7-1"/>
</dbReference>
<dbReference type="ProteomicsDB" id="294047">
    <molecule id="Q925I7-2"/>
</dbReference>
<dbReference type="ProteomicsDB" id="294048">
    <molecule id="Q925I7-3"/>
</dbReference>
<dbReference type="Antibodypedia" id="31835">
    <property type="antibodies" value="290 antibodies from 27 providers"/>
</dbReference>
<dbReference type="DNASU" id="71785"/>
<dbReference type="Ensembl" id="ENSMUST00000058692.9">
    <molecule id="Q925I7-2"/>
    <property type="protein sequence ID" value="ENSMUSP00000056240.7"/>
    <property type="gene ID" value="ENSMUSG00000032006.16"/>
</dbReference>
<dbReference type="Ensembl" id="ENSMUST00000168039.8">
    <molecule id="Q925I7-1"/>
    <property type="protein sequence ID" value="ENSMUSP00000128388.2"/>
    <property type="gene ID" value="ENSMUSG00000032006.16"/>
</dbReference>
<dbReference type="Ensembl" id="ENSMUST00000214892.2">
    <molecule id="Q925I7-3"/>
    <property type="protein sequence ID" value="ENSMUSP00000149162.2"/>
    <property type="gene ID" value="ENSMUSG00000032006.16"/>
</dbReference>
<dbReference type="GeneID" id="71785"/>
<dbReference type="KEGG" id="mmu:71785"/>
<dbReference type="UCSC" id="uc009oby.1">
    <molecule id="Q925I7-1"/>
    <property type="organism name" value="mouse"/>
</dbReference>
<dbReference type="UCSC" id="uc009obz.1">
    <molecule id="Q925I7-2"/>
    <property type="organism name" value="mouse"/>
</dbReference>
<dbReference type="UCSC" id="uc012gnq.1">
    <molecule id="Q925I7-3"/>
    <property type="organism name" value="mouse"/>
</dbReference>
<dbReference type="AGR" id="MGI:1919035"/>
<dbReference type="CTD" id="80310"/>
<dbReference type="MGI" id="MGI:1919035">
    <property type="gene designation" value="Pdgfd"/>
</dbReference>
<dbReference type="VEuPathDB" id="HostDB:ENSMUSG00000032006"/>
<dbReference type="eggNOG" id="ENOG502QPQY">
    <property type="taxonomic scope" value="Eukaryota"/>
</dbReference>
<dbReference type="GeneTree" id="ENSGT00940000159575"/>
<dbReference type="HOGENOM" id="CLU_037859_1_0_1"/>
<dbReference type="InParanoid" id="Q925I7"/>
<dbReference type="OMA" id="HHETCEC"/>
<dbReference type="OrthoDB" id="8641091at2759"/>
<dbReference type="PhylomeDB" id="Q925I7"/>
<dbReference type="TreeFam" id="TF332130"/>
<dbReference type="Reactome" id="R-MMU-186797">
    <property type="pathway name" value="Signaling by PDGF"/>
</dbReference>
<dbReference type="BioGRID-ORCS" id="71785">
    <property type="hits" value="2 hits in 77 CRISPR screens"/>
</dbReference>
<dbReference type="ChiTaRS" id="Pdgfd">
    <property type="organism name" value="mouse"/>
</dbReference>
<dbReference type="PRO" id="PR:Q925I7"/>
<dbReference type="Proteomes" id="UP000000589">
    <property type="component" value="Chromosome 9"/>
</dbReference>
<dbReference type="RNAct" id="Q925I7">
    <property type="molecule type" value="protein"/>
</dbReference>
<dbReference type="Bgee" id="ENSMUSG00000032006">
    <property type="expression patterns" value="Expressed in interventricular septum and 204 other cell types or tissues"/>
</dbReference>
<dbReference type="GO" id="GO:0005615">
    <property type="term" value="C:extracellular space"/>
    <property type="evidence" value="ECO:0007005"/>
    <property type="project" value="BHF-UCL"/>
</dbReference>
<dbReference type="GO" id="GO:0016020">
    <property type="term" value="C:membrane"/>
    <property type="evidence" value="ECO:0007669"/>
    <property type="project" value="InterPro"/>
</dbReference>
<dbReference type="GO" id="GO:0008083">
    <property type="term" value="F:growth factor activity"/>
    <property type="evidence" value="ECO:0007669"/>
    <property type="project" value="UniProtKB-KW"/>
</dbReference>
<dbReference type="GO" id="GO:0005161">
    <property type="term" value="F:platelet-derived growth factor receptor binding"/>
    <property type="evidence" value="ECO:0000266"/>
    <property type="project" value="MGI"/>
</dbReference>
<dbReference type="GO" id="GO:0071230">
    <property type="term" value="P:cellular response to amino acid stimulus"/>
    <property type="evidence" value="ECO:0000314"/>
    <property type="project" value="MGI"/>
</dbReference>
<dbReference type="GO" id="GO:0070301">
    <property type="term" value="P:cellular response to hydrogen peroxide"/>
    <property type="evidence" value="ECO:0007669"/>
    <property type="project" value="Ensembl"/>
</dbReference>
<dbReference type="GO" id="GO:0036120">
    <property type="term" value="P:cellular response to platelet-derived growth factor stimulus"/>
    <property type="evidence" value="ECO:0007669"/>
    <property type="project" value="Ensembl"/>
</dbReference>
<dbReference type="GO" id="GO:0071560">
    <property type="term" value="P:cellular response to transforming growth factor beta stimulus"/>
    <property type="evidence" value="ECO:0007669"/>
    <property type="project" value="Ensembl"/>
</dbReference>
<dbReference type="GO" id="GO:0051781">
    <property type="term" value="P:positive regulation of cell division"/>
    <property type="evidence" value="ECO:0007669"/>
    <property type="project" value="UniProtKB-KW"/>
</dbReference>
<dbReference type="GO" id="GO:0048146">
    <property type="term" value="P:positive regulation of fibroblast proliferation"/>
    <property type="evidence" value="ECO:0007669"/>
    <property type="project" value="Ensembl"/>
</dbReference>
<dbReference type="GO" id="GO:0072126">
    <property type="term" value="P:positive regulation of glomerular mesangial cell proliferation"/>
    <property type="evidence" value="ECO:0007669"/>
    <property type="project" value="Ensembl"/>
</dbReference>
<dbReference type="GO" id="GO:2000439">
    <property type="term" value="P:positive regulation of monocyte extravasation"/>
    <property type="evidence" value="ECO:0007669"/>
    <property type="project" value="Ensembl"/>
</dbReference>
<dbReference type="GO" id="GO:0071673">
    <property type="term" value="P:positive regulation of smooth muscle cell chemotaxis"/>
    <property type="evidence" value="ECO:0007669"/>
    <property type="project" value="Ensembl"/>
</dbReference>
<dbReference type="GO" id="GO:0048661">
    <property type="term" value="P:positive regulation of smooth muscle cell proliferation"/>
    <property type="evidence" value="ECO:0007669"/>
    <property type="project" value="Ensembl"/>
</dbReference>
<dbReference type="CDD" id="cd00041">
    <property type="entry name" value="CUB"/>
    <property type="match status" value="1"/>
</dbReference>
<dbReference type="CDD" id="cd00135">
    <property type="entry name" value="PDGF"/>
    <property type="match status" value="1"/>
</dbReference>
<dbReference type="FunFam" id="2.10.90.10:FF:000010">
    <property type="entry name" value="Platelet derived growth factor C"/>
    <property type="match status" value="1"/>
</dbReference>
<dbReference type="FunFam" id="2.60.120.290:FF:000017">
    <property type="entry name" value="Platelet derived growth factor C"/>
    <property type="match status" value="1"/>
</dbReference>
<dbReference type="Gene3D" id="2.10.90.10">
    <property type="entry name" value="Cystine-knot cytokines"/>
    <property type="match status" value="1"/>
</dbReference>
<dbReference type="Gene3D" id="2.60.120.290">
    <property type="entry name" value="Spermadhesin, CUB domain"/>
    <property type="match status" value="1"/>
</dbReference>
<dbReference type="InterPro" id="IPR000859">
    <property type="entry name" value="CUB_dom"/>
</dbReference>
<dbReference type="InterPro" id="IPR029034">
    <property type="entry name" value="Cystine-knot_cytokine"/>
</dbReference>
<dbReference type="InterPro" id="IPR000072">
    <property type="entry name" value="PDGF/VEGF_dom"/>
</dbReference>
<dbReference type="InterPro" id="IPR035914">
    <property type="entry name" value="Sperma_CUB_dom_sf"/>
</dbReference>
<dbReference type="PANTHER" id="PTHR11633">
    <property type="entry name" value="PLATELET-DERIVED GROWTH FACTOR"/>
    <property type="match status" value="1"/>
</dbReference>
<dbReference type="PANTHER" id="PTHR11633:SF4">
    <property type="entry name" value="PLATELET-DERIVED GROWTH FACTOR D"/>
    <property type="match status" value="1"/>
</dbReference>
<dbReference type="Pfam" id="PF00431">
    <property type="entry name" value="CUB"/>
    <property type="match status" value="1"/>
</dbReference>
<dbReference type="Pfam" id="PF00341">
    <property type="entry name" value="PDGF"/>
    <property type="match status" value="1"/>
</dbReference>
<dbReference type="SMART" id="SM00042">
    <property type="entry name" value="CUB"/>
    <property type="match status" value="1"/>
</dbReference>
<dbReference type="SMART" id="SM00141">
    <property type="entry name" value="PDGF"/>
    <property type="match status" value="1"/>
</dbReference>
<dbReference type="SUPFAM" id="SSF57501">
    <property type="entry name" value="Cystine-knot cytokines"/>
    <property type="match status" value="1"/>
</dbReference>
<dbReference type="SUPFAM" id="SSF49854">
    <property type="entry name" value="Spermadhesin, CUB domain"/>
    <property type="match status" value="1"/>
</dbReference>
<dbReference type="PROSITE" id="PS01180">
    <property type="entry name" value="CUB"/>
    <property type="match status" value="1"/>
</dbReference>
<dbReference type="PROSITE" id="PS50278">
    <property type="entry name" value="PDGF_2"/>
    <property type="match status" value="1"/>
</dbReference>
<proteinExistence type="evidence at transcript level"/>
<evidence type="ECO:0000250" key="1"/>
<evidence type="ECO:0000255" key="2"/>
<evidence type="ECO:0000255" key="3">
    <source>
        <dbReference type="PROSITE-ProRule" id="PRU00059"/>
    </source>
</evidence>
<evidence type="ECO:0000269" key="4">
    <source>
    </source>
</evidence>
<evidence type="ECO:0000269" key="5">
    <source>
    </source>
</evidence>
<evidence type="ECO:0000269" key="6">
    <source>
    </source>
</evidence>
<evidence type="ECO:0000269" key="7">
    <source>
    </source>
</evidence>
<evidence type="ECO:0000269" key="8">
    <source>
    </source>
</evidence>
<evidence type="ECO:0000269" key="9">
    <source>
    </source>
</evidence>
<evidence type="ECO:0000303" key="10">
    <source>
    </source>
</evidence>
<evidence type="ECO:0000303" key="11">
    <source>
    </source>
</evidence>
<evidence type="ECO:0000303" key="12">
    <source>
    </source>
</evidence>
<evidence type="ECO:0000305" key="13"/>
<feature type="signal peptide" evidence="2">
    <location>
        <begin position="1"/>
        <end position="23"/>
    </location>
</feature>
<feature type="chain" id="PRO_0000250190" description="Platelet-derived growth factor D, latent form">
    <location>
        <begin position="24"/>
        <end position="370"/>
    </location>
</feature>
<feature type="chain" id="PRO_0000250191" description="Platelet-derived growth factor D, receptor-binding form" evidence="2">
    <location>
        <begin position="250"/>
        <end position="370"/>
    </location>
</feature>
<feature type="domain" description="CUB" evidence="3">
    <location>
        <begin position="52"/>
        <end position="170"/>
    </location>
</feature>
<feature type="site" description="Cleavage" evidence="2">
    <location>
        <begin position="247"/>
        <end position="248"/>
    </location>
</feature>
<feature type="site" description="Cleavage" evidence="2">
    <location>
        <begin position="249"/>
        <end position="250"/>
    </location>
</feature>
<feature type="glycosylation site" description="N-linked (GlcNAc...) asparagine" evidence="2">
    <location>
        <position position="276"/>
    </location>
</feature>
<feature type="disulfide bond" evidence="3">
    <location>
        <begin position="109"/>
        <end position="131"/>
    </location>
</feature>
<feature type="disulfide bond" description="Interchain" evidence="3">
    <location>
        <position position="296"/>
    </location>
</feature>
<feature type="disulfide bond" evidence="3">
    <location>
        <begin position="302"/>
        <end position="360"/>
    </location>
</feature>
<feature type="disulfide bond" evidence="3">
    <location>
        <begin position="306"/>
        <end position="362"/>
    </location>
</feature>
<feature type="splice variant" id="VSP_020616" description="In isoform 2." evidence="12">
    <location>
        <begin position="42"/>
        <end position="47"/>
    </location>
</feature>
<feature type="splice variant" id="VSP_020617" description="In isoform 3." evidence="10 11">
    <original>VDLD</original>
    <variation>GIEV</variation>
    <location>
        <begin position="258"/>
        <end position="261"/>
    </location>
</feature>
<feature type="splice variant" id="VSP_020618" description="In isoform 3." evidence="10 11">
    <location>
        <begin position="262"/>
        <end position="370"/>
    </location>
</feature>
<feature type="sequence conflict" description="In Ref. 4; AAH30896." evidence="13" ref="4">
    <original>F</original>
    <variation>S</variation>
    <location>
        <position position="173"/>
    </location>
</feature>